<comment type="function">
    <text evidence="1">Catalyzes the prenylation of para-hydroxybenzoate (PHB) with an all-trans polyprenyl group. Mediates the second step in the final reaction sequence of ubiquinone-8 (UQ-8) biosynthesis, which is the condensation of the polyisoprenoid side chain with PHB, generating the first membrane-bound Q intermediate 3-octaprenyl-4-hydroxybenzoate.</text>
</comment>
<comment type="catalytic activity">
    <reaction evidence="1">
        <text>all-trans-octaprenyl diphosphate + 4-hydroxybenzoate = 4-hydroxy-3-(all-trans-octaprenyl)benzoate + diphosphate</text>
        <dbReference type="Rhea" id="RHEA:27782"/>
        <dbReference type="ChEBI" id="CHEBI:1617"/>
        <dbReference type="ChEBI" id="CHEBI:17879"/>
        <dbReference type="ChEBI" id="CHEBI:33019"/>
        <dbReference type="ChEBI" id="CHEBI:57711"/>
        <dbReference type="EC" id="2.5.1.39"/>
    </reaction>
</comment>
<comment type="cofactor">
    <cofactor evidence="1">
        <name>Mg(2+)</name>
        <dbReference type="ChEBI" id="CHEBI:18420"/>
    </cofactor>
</comment>
<comment type="pathway">
    <text evidence="1">Cofactor biosynthesis; ubiquinone biosynthesis.</text>
</comment>
<comment type="subcellular location">
    <subcellularLocation>
        <location evidence="1">Cell inner membrane</location>
        <topology evidence="1">Multi-pass membrane protein</topology>
    </subcellularLocation>
</comment>
<comment type="similarity">
    <text evidence="1">Belongs to the UbiA prenyltransferase family.</text>
</comment>
<proteinExistence type="inferred from homology"/>
<evidence type="ECO:0000255" key="1">
    <source>
        <dbReference type="HAMAP-Rule" id="MF_01635"/>
    </source>
</evidence>
<dbReference type="EC" id="2.5.1.39" evidence="1"/>
<dbReference type="EMBL" id="CP000109">
    <property type="protein sequence ID" value="ABB42749.1"/>
    <property type="molecule type" value="Genomic_DNA"/>
</dbReference>
<dbReference type="SMR" id="Q31DM4"/>
<dbReference type="STRING" id="317025.Tcr_2161"/>
<dbReference type="KEGG" id="tcx:Tcr_2161"/>
<dbReference type="eggNOG" id="COG0382">
    <property type="taxonomic scope" value="Bacteria"/>
</dbReference>
<dbReference type="HOGENOM" id="CLU_034879_1_0_6"/>
<dbReference type="OrthoDB" id="9782418at2"/>
<dbReference type="UniPathway" id="UPA00232"/>
<dbReference type="GO" id="GO:0005886">
    <property type="term" value="C:plasma membrane"/>
    <property type="evidence" value="ECO:0007669"/>
    <property type="project" value="UniProtKB-SubCell"/>
</dbReference>
<dbReference type="GO" id="GO:0008412">
    <property type="term" value="F:4-hydroxybenzoate polyprenyltransferase activity"/>
    <property type="evidence" value="ECO:0007669"/>
    <property type="project" value="UniProtKB-UniRule"/>
</dbReference>
<dbReference type="GO" id="GO:0006744">
    <property type="term" value="P:ubiquinone biosynthetic process"/>
    <property type="evidence" value="ECO:0007669"/>
    <property type="project" value="UniProtKB-UniRule"/>
</dbReference>
<dbReference type="CDD" id="cd13959">
    <property type="entry name" value="PT_UbiA_COQ2"/>
    <property type="match status" value="1"/>
</dbReference>
<dbReference type="FunFam" id="1.10.357.140:FF:000002">
    <property type="entry name" value="4-hydroxybenzoate octaprenyltransferase"/>
    <property type="match status" value="1"/>
</dbReference>
<dbReference type="FunFam" id="1.20.120.1780:FF:000001">
    <property type="entry name" value="4-hydroxybenzoate octaprenyltransferase"/>
    <property type="match status" value="1"/>
</dbReference>
<dbReference type="Gene3D" id="1.10.357.140">
    <property type="entry name" value="UbiA prenyltransferase"/>
    <property type="match status" value="1"/>
</dbReference>
<dbReference type="Gene3D" id="1.20.120.1780">
    <property type="entry name" value="UbiA prenyltransferase"/>
    <property type="match status" value="1"/>
</dbReference>
<dbReference type="HAMAP" id="MF_01635">
    <property type="entry name" value="UbiA"/>
    <property type="match status" value="1"/>
</dbReference>
<dbReference type="InterPro" id="IPR006370">
    <property type="entry name" value="HB_polyprenyltransferase-like"/>
</dbReference>
<dbReference type="InterPro" id="IPR039653">
    <property type="entry name" value="Prenyltransferase"/>
</dbReference>
<dbReference type="InterPro" id="IPR000537">
    <property type="entry name" value="UbiA_prenyltransferase"/>
</dbReference>
<dbReference type="InterPro" id="IPR030470">
    <property type="entry name" value="UbiA_prenylTrfase_CS"/>
</dbReference>
<dbReference type="InterPro" id="IPR044878">
    <property type="entry name" value="UbiA_sf"/>
</dbReference>
<dbReference type="NCBIfam" id="TIGR01474">
    <property type="entry name" value="ubiA_proteo"/>
    <property type="match status" value="1"/>
</dbReference>
<dbReference type="PANTHER" id="PTHR11048:SF28">
    <property type="entry name" value="4-HYDROXYBENZOATE POLYPRENYLTRANSFERASE, MITOCHONDRIAL"/>
    <property type="match status" value="1"/>
</dbReference>
<dbReference type="PANTHER" id="PTHR11048">
    <property type="entry name" value="PRENYLTRANSFERASES"/>
    <property type="match status" value="1"/>
</dbReference>
<dbReference type="Pfam" id="PF01040">
    <property type="entry name" value="UbiA"/>
    <property type="match status" value="1"/>
</dbReference>
<dbReference type="PROSITE" id="PS00943">
    <property type="entry name" value="UBIA"/>
    <property type="match status" value="1"/>
</dbReference>
<name>UBIA_HYDCU</name>
<organism>
    <name type="scientific">Hydrogenovibrio crunogenus (strain DSM 25203 / XCL-2)</name>
    <name type="common">Thiomicrospira crunogena</name>
    <dbReference type="NCBI Taxonomy" id="317025"/>
    <lineage>
        <taxon>Bacteria</taxon>
        <taxon>Pseudomonadati</taxon>
        <taxon>Pseudomonadota</taxon>
        <taxon>Gammaproteobacteria</taxon>
        <taxon>Thiotrichales</taxon>
        <taxon>Piscirickettsiaceae</taxon>
        <taxon>Hydrogenovibrio</taxon>
    </lineage>
</organism>
<reference key="1">
    <citation type="journal article" date="2006" name="PLoS Biol.">
        <title>The genome of deep-sea vent chemolithoautotroph Thiomicrospira crunogena XCL-2.</title>
        <authorList>
            <person name="Scott K.M."/>
            <person name="Sievert S.M."/>
            <person name="Abril F.N."/>
            <person name="Ball L.A."/>
            <person name="Barrett C.J."/>
            <person name="Blake R.A."/>
            <person name="Boller A.J."/>
            <person name="Chain P.S.G."/>
            <person name="Clark J.A."/>
            <person name="Davis C.R."/>
            <person name="Detter C."/>
            <person name="Do K.F."/>
            <person name="Dobrinski K.P."/>
            <person name="Faza B.I."/>
            <person name="Fitzpatrick K.A."/>
            <person name="Freyermuth S.K."/>
            <person name="Harmer T.L."/>
            <person name="Hauser L.J."/>
            <person name="Huegler M."/>
            <person name="Kerfeld C.A."/>
            <person name="Klotz M.G."/>
            <person name="Kong W.W."/>
            <person name="Land M."/>
            <person name="Lapidus A."/>
            <person name="Larimer F.W."/>
            <person name="Longo D.L."/>
            <person name="Lucas S."/>
            <person name="Malfatti S.A."/>
            <person name="Massey S.E."/>
            <person name="Martin D.D."/>
            <person name="McCuddin Z."/>
            <person name="Meyer F."/>
            <person name="Moore J.L."/>
            <person name="Ocampo L.H. Jr."/>
            <person name="Paul J.H."/>
            <person name="Paulsen I.T."/>
            <person name="Reep D.K."/>
            <person name="Ren Q."/>
            <person name="Ross R.L."/>
            <person name="Sato P.Y."/>
            <person name="Thomas P."/>
            <person name="Tinkham L.E."/>
            <person name="Zeruth G.T."/>
        </authorList>
    </citation>
    <scope>NUCLEOTIDE SEQUENCE [LARGE SCALE GENOMIC DNA]</scope>
    <source>
        <strain>DSM 25203 / XCL-2</strain>
    </source>
</reference>
<gene>
    <name evidence="1" type="primary">ubiA</name>
    <name type="ordered locus">Tcr_2161</name>
</gene>
<feature type="chain" id="PRO_0000262848" description="4-hydroxybenzoate octaprenyltransferase">
    <location>
        <begin position="1"/>
        <end position="285"/>
    </location>
</feature>
<feature type="transmembrane region" description="Helical" evidence="1">
    <location>
        <begin position="20"/>
        <end position="37"/>
    </location>
</feature>
<feature type="transmembrane region" description="Helical" evidence="1">
    <location>
        <begin position="96"/>
        <end position="116"/>
    </location>
</feature>
<feature type="transmembrane region" description="Helical" evidence="1">
    <location>
        <begin position="138"/>
        <end position="158"/>
    </location>
</feature>
<feature type="transmembrane region" description="Helical" evidence="1">
    <location>
        <begin position="166"/>
        <end position="186"/>
    </location>
</feature>
<feature type="transmembrane region" description="Helical" evidence="1">
    <location>
        <begin position="211"/>
        <end position="231"/>
    </location>
</feature>
<feature type="transmembrane region" description="Helical" evidence="1">
    <location>
        <begin position="234"/>
        <end position="254"/>
    </location>
</feature>
<feature type="transmembrane region" description="Helical" evidence="1">
    <location>
        <begin position="262"/>
        <end position="282"/>
    </location>
</feature>
<keyword id="KW-0997">Cell inner membrane</keyword>
<keyword id="KW-1003">Cell membrane</keyword>
<keyword id="KW-0460">Magnesium</keyword>
<keyword id="KW-0472">Membrane</keyword>
<keyword id="KW-0808">Transferase</keyword>
<keyword id="KW-0812">Transmembrane</keyword>
<keyword id="KW-1133">Transmembrane helix</keyword>
<keyword id="KW-0831">Ubiquinone biosynthesis</keyword>
<protein>
    <recommendedName>
        <fullName evidence="1">4-hydroxybenzoate octaprenyltransferase</fullName>
        <ecNumber evidence="1">2.5.1.39</ecNumber>
    </recommendedName>
    <alternativeName>
        <fullName evidence="1">4-HB polyprenyltransferase</fullName>
    </alternativeName>
</protein>
<sequence length="285" mass="32157">MIHKQQLQAYLQLTRIDRPIGIYLVLWPALWALWLAADGMPPMSILIIFILGAVIMRSAGCVINDYADRHFDGYVTRTCARPLATGQLTERQALKFFFVLCLLAFGLVLFLNPFTILLSLGAVGLAILYPFMKRHTFWPQAFLGAAFAWAIPMAFAAIQNQVPWQAWVIFGVTLVWALVYDTAYAVADKEDDVKLGIKSTAILFGDRVQEIIGFFQAIMLLGFLWIGDLFGLSWLYYGSVLIAAGFFVYHQYLLSFDQPQKAFKAFLNNHWVGLVILIGIMLDTL</sequence>
<accession>Q31DM4</accession>